<gene>
    <name type="primary">ATG2</name>
    <name type="ORF">CHGG_07016</name>
</gene>
<proteinExistence type="inferred from homology"/>
<feature type="chain" id="PRO_0000317807" description="Autophagy-related protein 2">
    <location>
        <begin position="1"/>
        <end position="2043"/>
    </location>
</feature>
<feature type="region of interest" description="Disordered" evidence="3">
    <location>
        <begin position="111"/>
        <end position="130"/>
    </location>
</feature>
<feature type="region of interest" description="Disordered" evidence="3">
    <location>
        <begin position="288"/>
        <end position="341"/>
    </location>
</feature>
<feature type="region of interest" description="Disordered" evidence="3">
    <location>
        <begin position="353"/>
        <end position="392"/>
    </location>
</feature>
<feature type="region of interest" description="Disordered" evidence="3">
    <location>
        <begin position="413"/>
        <end position="458"/>
    </location>
</feature>
<feature type="region of interest" description="Disordered" evidence="3">
    <location>
        <begin position="469"/>
        <end position="488"/>
    </location>
</feature>
<feature type="region of interest" description="Disordered" evidence="3">
    <location>
        <begin position="493"/>
        <end position="563"/>
    </location>
</feature>
<feature type="region of interest" description="Disordered" evidence="3">
    <location>
        <begin position="839"/>
        <end position="863"/>
    </location>
</feature>
<feature type="region of interest" description="Disordered" evidence="3">
    <location>
        <begin position="1370"/>
        <end position="1400"/>
    </location>
</feature>
<feature type="compositionally biased region" description="Low complexity" evidence="3">
    <location>
        <begin position="288"/>
        <end position="306"/>
    </location>
</feature>
<feature type="compositionally biased region" description="Polar residues" evidence="3">
    <location>
        <begin position="308"/>
        <end position="325"/>
    </location>
</feature>
<feature type="compositionally biased region" description="Low complexity" evidence="3">
    <location>
        <begin position="434"/>
        <end position="447"/>
    </location>
</feature>
<feature type="compositionally biased region" description="Basic and acidic residues" evidence="3">
    <location>
        <begin position="448"/>
        <end position="458"/>
    </location>
</feature>
<feature type="compositionally biased region" description="Polar residues" evidence="3">
    <location>
        <begin position="470"/>
        <end position="479"/>
    </location>
</feature>
<feature type="compositionally biased region" description="Pro residues" evidence="3">
    <location>
        <begin position="517"/>
        <end position="527"/>
    </location>
</feature>
<feature type="compositionally biased region" description="Polar residues" evidence="3">
    <location>
        <begin position="528"/>
        <end position="546"/>
    </location>
</feature>
<feature type="compositionally biased region" description="Acidic residues" evidence="3">
    <location>
        <begin position="1370"/>
        <end position="1392"/>
    </location>
</feature>
<protein>
    <recommendedName>
        <fullName>Autophagy-related protein 2</fullName>
    </recommendedName>
</protein>
<accession>Q2GYD8</accession>
<evidence type="ECO:0000250" key="1">
    <source>
        <dbReference type="UniProtKB" id="O94649"/>
    </source>
</evidence>
<evidence type="ECO:0000250" key="2">
    <source>
        <dbReference type="UniProtKB" id="P53855"/>
    </source>
</evidence>
<evidence type="ECO:0000256" key="3">
    <source>
        <dbReference type="SAM" id="MobiDB-lite"/>
    </source>
</evidence>
<evidence type="ECO:0000305" key="4"/>
<comment type="function">
    <text evidence="2">Lipid transfer protein required for autophagosome completion and peroxisome degradation. Tethers the edge of the isolation membrane (IM) to the endoplasmic reticulum (ER) and mediates direct lipid transfer from ER to IM for IM expansion. ATG2 binds to the ER exit site (ERES), which is the membrane source for autophagosome formation, using basic residues in its N-terminal region (NR) and to the expanding edge of the IM through its C-terminal region. The latter binding is assisted by an ATG18-PtdIns3P interaction. ATG2 then extracts phospholipids from the membrane source using its NR and transfers them to ATG9 to the IM through its predicted beta-sheet-rich structure for membrane expansion.</text>
</comment>
<comment type="catalytic activity">
    <reaction evidence="1">
        <text>a 1,2-diacyl-sn-glycero-3-phosphocholine(in) = a 1,2-diacyl-sn-glycero-3-phosphocholine(out)</text>
        <dbReference type="Rhea" id="RHEA:38571"/>
        <dbReference type="ChEBI" id="CHEBI:57643"/>
    </reaction>
</comment>
<comment type="catalytic activity">
    <reaction evidence="1">
        <text>a 1,2-diacyl-sn-glycero-3-phospho-L-serine(in) = a 1,2-diacyl-sn-glycero-3-phospho-L-serine(out)</text>
        <dbReference type="Rhea" id="RHEA:38663"/>
        <dbReference type="ChEBI" id="CHEBI:57262"/>
    </reaction>
</comment>
<comment type="catalytic activity">
    <reaction evidence="1">
        <text>a 1,2-diacyl-sn-glycero-3-phosphoethanolamine(in) = a 1,2-diacyl-sn-glycero-3-phosphoethanolamine(out)</text>
        <dbReference type="Rhea" id="RHEA:38895"/>
        <dbReference type="ChEBI" id="CHEBI:64612"/>
    </reaction>
</comment>
<comment type="subcellular location">
    <subcellularLocation>
        <location evidence="2">Preautophagosomal structure membrane</location>
        <topology evidence="2">Peripheral membrane protein</topology>
    </subcellularLocation>
    <subcellularLocation>
        <location evidence="2">Endoplasmic reticulum membrane</location>
        <topology evidence="2">Peripheral membrane protein</topology>
    </subcellularLocation>
</comment>
<comment type="similarity">
    <text evidence="4">Belongs to the ATG2 family.</text>
</comment>
<name>ATG2_CHAGB</name>
<keyword id="KW-0072">Autophagy</keyword>
<keyword id="KW-0256">Endoplasmic reticulum</keyword>
<keyword id="KW-0445">Lipid transport</keyword>
<keyword id="KW-0472">Membrane</keyword>
<keyword id="KW-0653">Protein transport</keyword>
<keyword id="KW-1185">Reference proteome</keyword>
<keyword id="KW-0813">Transport</keyword>
<reference key="1">
    <citation type="journal article" date="2015" name="Genome Announc.">
        <title>Draft genome sequence of the cellulolytic fungus Chaetomium globosum.</title>
        <authorList>
            <person name="Cuomo C.A."/>
            <person name="Untereiner W.A."/>
            <person name="Ma L.-J."/>
            <person name="Grabherr M."/>
            <person name="Birren B.W."/>
        </authorList>
    </citation>
    <scope>NUCLEOTIDE SEQUENCE [LARGE SCALE GENOMIC DNA]</scope>
    <source>
        <strain>ATCC 6205 / CBS 148.51 / DSM 1962 / NBRC 6347 / NRRL 1970</strain>
    </source>
</reference>
<sequence length="2043" mass="221553">MASFFQSFRSSSMAKQLLRFALSRLDLLDTQALDLENLDFALGRNTVLEFRDVGLILQKLERLLGLPPAFSLQKAKVLILRVTIPMDFYASPITAEIDGVDIRLKVASKKEKDRQDAGKRGKGMAGSEAVPTAADLAQSFLETQPVAEKEELEQALAAETQDLAASMAASEPESDDDSPVGTGQPLSLPVFLTNFLHGIVDRIQIRVQSVTFQADVEVAVDSNSPVPEPVTFQLSLDNINVEGVTSTSETPDEASTIVHKEGKRHVLLDNIRAALITETNVLSSLARSASMPSSSASRSPVAPRSPVDNETTAFNPSGLSRSVGSSAMAGSRDSSDDLPQSQHLQDNEAAFNIPYDFGDSNEPNEADEASPLSTPRASLYRGSPPPTITDHAKSAVLEPSPLIWSTAEREAQSVPFLRPPEGFPLSNDPSPAASVHSSSTNRSSGSSARDDLAESHIYSHEDAESMYMSAFSQTGSQGLRTGMPGAWDAFDDAEESETEAGPSTSTQAAPYDGSFDPPQPDRIPSPEQPSQDQKRNSPSFYAQDSSAEVPEPPQDDIPTPRGPTRLVKQLLSLSSISIYLPSSHKHVKIDTPDDGKSISPNIPGAFSMHSAAATSPKPTPADEPAGETTPIDPSIEIVLKPVEIQFDASIGFLLAMVVAQLLEAAQGGSKDAAGPTAAKPPSASPDVKVTVEQLSVLFLEKLAGVADVPQRFFEKSTPDLSSDVLLQAQVVDLRGSVSHDGPQTEMDFSIEKLKFGYANDDIVSFDRSVLMFESVANTFPSAGQDISVKATMGPEISRLEVNTLPLYVQLDLQKLDEVFGWFGGLSSFLNMGTSITANTSRADKSPANPVQKPKGVRFDEPVHPDDQAVTRENKTDLRINGLQVDVLGKDCSVMLNTSAFKLVSREGGIGIHLSRIRLSGPYFKNSRAEPPIVSEVLDTRVEFLPSPRAKDLERLLELITPSSNKFDEDEDEIMVDTLLRQRRKGSVLSLAIGKVRFDAGNLPQLTCLPSLIDDLAKLGTVAKYLPEDDRPGLLTLCHVKNAECRVDFGGRFGAILTSLTDLEVAHISMPQLAAVALGEIAVTRNKIEELVVTSPPPQTGPWQNLPVFRLRLIDDMEPVLKIKLMGLGLEYRVPTIMDLLNLGQDVTPEDYEAGLAASVASLGEQAHTVIKRASSGSLTSTGQAKAPRSLKVDVAFRDCLIGLNPLALPSKLTVALTDAHLEMVPGPQELVAVTTMKRVSVLLIDDISILESPGVRFTTSRRPPVVISTQVAELCTMGYVNICQISSAKATVTVSRDSQGDTQLEVEVRDDLLVLETCADSTQTLITLANALTPPTPPSTEIKYRTTVFPVEDLLASIRAETFGRAEGEYDLDNDFDVPQELGDDADSDLDFDAGPSDSPLNLDSQYLEENIVQEELFDATSSSMLREGATKFEDTNDGVLLSTAGLDNPSSSGLEISSSDLSITDDYFDKGPVGRGTAHRWDSKTDRYDQHNEIKLQRSPLKLCVRDVHVIWHLFDGYDWERTREVIAKAVKEVEAKAYERRAKTDRRGGFDPEFGEDEPIIGDCLFNSIYIGIPSNRDPKELAQAINHGLHDFGDTESIATSTVTTSTLRAAGQRRRSKSLRLDRSRRHKITFELKGVSADVVMFPPGSGETVNSLDIRLRDVDVFDHVPESTWKKFATYDLDAGERELGADMVHAEIITTKPADTPATEMVISATILPLRLHVDQDALDFITRFFTFRDETAPIHASPSDVPFIQRIVVNSIPIQLDFKPKRVDYAGLRSGKTTEFMNFMILEGARLVLRRVILYGVSGFDRLGDQLNDIWTVDVKRNQLPGVLAGLAPVRSLVNAGSGFRDLIEIPIREYRKDGRIVRSLRKGATAFAKTTGTEVVKLGAKLAIGTQNVLQGAEGLLVPQTGESSSNAAAVAAVLGDDWDEAEYEEEINRKFSLYADQPLGIVQGVRGAYASLARDLSVARDAIIAVPAEIMESEGAQGAAAAVLKKAPTIILRPAIGATKAIGQTLLGATNSLDPMHRKRVDAKYKKH</sequence>
<dbReference type="EMBL" id="CH408033">
    <property type="protein sequence ID" value="EAQ85763.1"/>
    <property type="molecule type" value="Genomic_DNA"/>
</dbReference>
<dbReference type="RefSeq" id="XP_001224672.1">
    <property type="nucleotide sequence ID" value="XM_001224671.1"/>
</dbReference>
<dbReference type="STRING" id="306901.Q2GYD8"/>
<dbReference type="GeneID" id="4394055"/>
<dbReference type="VEuPathDB" id="FungiDB:CHGG_07016"/>
<dbReference type="eggNOG" id="KOG2993">
    <property type="taxonomic scope" value="Eukaryota"/>
</dbReference>
<dbReference type="HOGENOM" id="CLU_000626_1_0_1"/>
<dbReference type="InParanoid" id="Q2GYD8"/>
<dbReference type="OMA" id="AVWKRAP"/>
<dbReference type="OrthoDB" id="18982at2759"/>
<dbReference type="Proteomes" id="UP000001056">
    <property type="component" value="Unassembled WGS sequence"/>
</dbReference>
<dbReference type="GO" id="GO:0005789">
    <property type="term" value="C:endoplasmic reticulum membrane"/>
    <property type="evidence" value="ECO:0007669"/>
    <property type="project" value="UniProtKB-SubCell"/>
</dbReference>
<dbReference type="GO" id="GO:0061908">
    <property type="term" value="C:phagophore"/>
    <property type="evidence" value="ECO:0007669"/>
    <property type="project" value="TreeGrafter"/>
</dbReference>
<dbReference type="GO" id="GO:0034045">
    <property type="term" value="C:phagophore assembly site membrane"/>
    <property type="evidence" value="ECO:0007669"/>
    <property type="project" value="UniProtKB-SubCell"/>
</dbReference>
<dbReference type="GO" id="GO:0032266">
    <property type="term" value="F:phosphatidylinositol-3-phosphate binding"/>
    <property type="evidence" value="ECO:0007669"/>
    <property type="project" value="TreeGrafter"/>
</dbReference>
<dbReference type="GO" id="GO:0043495">
    <property type="term" value="F:protein-membrane adaptor activity"/>
    <property type="evidence" value="ECO:0007669"/>
    <property type="project" value="TreeGrafter"/>
</dbReference>
<dbReference type="GO" id="GO:0000045">
    <property type="term" value="P:autophagosome assembly"/>
    <property type="evidence" value="ECO:0007669"/>
    <property type="project" value="TreeGrafter"/>
</dbReference>
<dbReference type="GO" id="GO:0000422">
    <property type="term" value="P:autophagy of mitochondrion"/>
    <property type="evidence" value="ECO:0007669"/>
    <property type="project" value="TreeGrafter"/>
</dbReference>
<dbReference type="GO" id="GO:0061723">
    <property type="term" value="P:glycophagy"/>
    <property type="evidence" value="ECO:0007669"/>
    <property type="project" value="TreeGrafter"/>
</dbReference>
<dbReference type="GO" id="GO:0006869">
    <property type="term" value="P:lipid transport"/>
    <property type="evidence" value="ECO:0007669"/>
    <property type="project" value="UniProtKB-KW"/>
</dbReference>
<dbReference type="GO" id="GO:0034727">
    <property type="term" value="P:piecemeal microautophagy of the nucleus"/>
    <property type="evidence" value="ECO:0007669"/>
    <property type="project" value="TreeGrafter"/>
</dbReference>
<dbReference type="GO" id="GO:0015031">
    <property type="term" value="P:protein transport"/>
    <property type="evidence" value="ECO:0007669"/>
    <property type="project" value="UniProtKB-KW"/>
</dbReference>
<dbReference type="GO" id="GO:0061709">
    <property type="term" value="P:reticulophagy"/>
    <property type="evidence" value="ECO:0007669"/>
    <property type="project" value="TreeGrafter"/>
</dbReference>
<dbReference type="InterPro" id="IPR026849">
    <property type="entry name" value="ATG2"/>
</dbReference>
<dbReference type="PANTHER" id="PTHR13190">
    <property type="entry name" value="AUTOPHAGY-RELATED 2, ISOFORM A"/>
    <property type="match status" value="1"/>
</dbReference>
<dbReference type="PANTHER" id="PTHR13190:SF1">
    <property type="entry name" value="AUTOPHAGY-RELATED 2, ISOFORM A"/>
    <property type="match status" value="1"/>
</dbReference>
<dbReference type="Pfam" id="PF13329">
    <property type="entry name" value="ATG2_CAD"/>
    <property type="match status" value="1"/>
</dbReference>
<organism>
    <name type="scientific">Chaetomium globosum (strain ATCC 6205 / CBS 148.51 / DSM 1962 / NBRC 6347 / NRRL 1970)</name>
    <name type="common">Soil fungus</name>
    <dbReference type="NCBI Taxonomy" id="306901"/>
    <lineage>
        <taxon>Eukaryota</taxon>
        <taxon>Fungi</taxon>
        <taxon>Dikarya</taxon>
        <taxon>Ascomycota</taxon>
        <taxon>Pezizomycotina</taxon>
        <taxon>Sordariomycetes</taxon>
        <taxon>Sordariomycetidae</taxon>
        <taxon>Sordariales</taxon>
        <taxon>Chaetomiaceae</taxon>
        <taxon>Chaetomium</taxon>
    </lineage>
</organism>